<evidence type="ECO:0000250" key="1">
    <source>
        <dbReference type="UniProtKB" id="P14647"/>
    </source>
</evidence>
<evidence type="ECO:0000255" key="2">
    <source>
        <dbReference type="PROSITE-ProRule" id="PRU00539"/>
    </source>
</evidence>
<keyword id="KW-0460">Magnesium</keyword>
<keyword id="KW-0479">Metal-binding</keyword>
<keyword id="KW-0547">Nucleotide-binding</keyword>
<keyword id="KW-0548">Nucleotidyltransferase</keyword>
<keyword id="KW-1185">Reference proteome</keyword>
<keyword id="KW-0694">RNA-binding</keyword>
<keyword id="KW-0696">RNA-directed RNA polymerase</keyword>
<keyword id="KW-0808">Transferase</keyword>
<keyword id="KW-0693">Viral RNA replication</keyword>
<feature type="chain" id="PRO_0000164856" description="RNA-directed RNA polymerase subunit beta">
    <location>
        <begin position="1"/>
        <end position="576"/>
    </location>
</feature>
<feature type="domain" description="RdRp catalytic" evidence="2">
    <location>
        <begin position="259"/>
        <end position="391"/>
    </location>
</feature>
<feature type="binding site" evidence="1">
    <location>
        <position position="274"/>
    </location>
    <ligand>
        <name>Mg(2+)</name>
        <dbReference type="ChEBI" id="CHEBI:18420"/>
        <label>1</label>
    </ligand>
</feature>
<feature type="binding site" evidence="1">
    <location>
        <position position="274"/>
    </location>
    <ligand>
        <name>Mg(2+)</name>
        <dbReference type="ChEBI" id="CHEBI:18420"/>
        <label>2</label>
    </ligand>
</feature>
<feature type="binding site" evidence="1">
    <location>
        <position position="359"/>
    </location>
    <ligand>
        <name>Mg(2+)</name>
        <dbReference type="ChEBI" id="CHEBI:18420"/>
        <label>1</label>
    </ligand>
</feature>
<feature type="binding site" evidence="1">
    <location>
        <position position="359"/>
    </location>
    <ligand>
        <name>Mg(2+)</name>
        <dbReference type="ChEBI" id="CHEBI:18420"/>
        <label>2</label>
    </ligand>
</feature>
<feature type="binding site" evidence="1">
    <location>
        <position position="360"/>
    </location>
    <ligand>
        <name>Mg(2+)</name>
        <dbReference type="ChEBI" id="CHEBI:18420"/>
        <label>1</label>
    </ligand>
</feature>
<feature type="binding site" evidence="1">
    <location>
        <position position="360"/>
    </location>
    <ligand>
        <name>Mg(2+)</name>
        <dbReference type="ChEBI" id="CHEBI:18420"/>
        <label>2</label>
    </ligand>
</feature>
<name>RDRP_BPSP</name>
<dbReference type="EC" id="2.7.7.48" evidence="1"/>
<dbReference type="EMBL" id="X07489">
    <property type="protein sequence ID" value="CAA30375.1"/>
    <property type="molecule type" value="mRNA"/>
</dbReference>
<dbReference type="PIR" id="S01965">
    <property type="entry name" value="S01965"/>
</dbReference>
<dbReference type="RefSeq" id="NP_695028.1">
    <property type="nucleotide sequence ID" value="NC_004301.1"/>
</dbReference>
<dbReference type="SMR" id="P09675"/>
<dbReference type="GeneID" id="955458"/>
<dbReference type="KEGG" id="vg:955458"/>
<dbReference type="OrthoDB" id="10751at10239"/>
<dbReference type="Proteomes" id="UP000000728">
    <property type="component" value="Genome"/>
</dbReference>
<dbReference type="GO" id="GO:0046872">
    <property type="term" value="F:metal ion binding"/>
    <property type="evidence" value="ECO:0007669"/>
    <property type="project" value="UniProtKB-KW"/>
</dbReference>
<dbReference type="GO" id="GO:0000166">
    <property type="term" value="F:nucleotide binding"/>
    <property type="evidence" value="ECO:0007669"/>
    <property type="project" value="UniProtKB-KW"/>
</dbReference>
<dbReference type="GO" id="GO:0003723">
    <property type="term" value="F:RNA binding"/>
    <property type="evidence" value="ECO:0007669"/>
    <property type="project" value="UniProtKB-KW"/>
</dbReference>
<dbReference type="GO" id="GO:0003968">
    <property type="term" value="F:RNA-directed RNA polymerase activity"/>
    <property type="evidence" value="ECO:0007669"/>
    <property type="project" value="UniProtKB-KW"/>
</dbReference>
<dbReference type="GO" id="GO:0039694">
    <property type="term" value="P:viral RNA genome replication"/>
    <property type="evidence" value="ECO:0007669"/>
    <property type="project" value="InterPro"/>
</dbReference>
<dbReference type="CDD" id="cd23176">
    <property type="entry name" value="ps-ssRNAv_Leviviridae_RdRp"/>
    <property type="match status" value="1"/>
</dbReference>
<dbReference type="InterPro" id="IPR043502">
    <property type="entry name" value="DNA/RNA_pol_sf"/>
</dbReference>
<dbReference type="InterPro" id="IPR007096">
    <property type="entry name" value="RNA-dir_Rpol_cat_phage"/>
</dbReference>
<dbReference type="InterPro" id="IPR005093">
    <property type="entry name" value="RNArep_beta"/>
</dbReference>
<dbReference type="Pfam" id="PF03431">
    <property type="entry name" value="RNA_replicase_B"/>
    <property type="match status" value="1"/>
</dbReference>
<dbReference type="SUPFAM" id="SSF56672">
    <property type="entry name" value="DNA/RNA polymerases"/>
    <property type="match status" value="1"/>
</dbReference>
<dbReference type="PROSITE" id="PS50522">
    <property type="entry name" value="RDRP_PHAGE"/>
    <property type="match status" value="1"/>
</dbReference>
<proteinExistence type="evidence at transcript level"/>
<comment type="function">
    <text evidence="1">This is the catalytic subunit of the viral RNA-dependent RNA polymerase complex. This complex is involved in viral RNA replication that produces (+)-stranded genomes via a complementary, (-)-stranded intermediate. Binds RNA cooperatively with the host ribosomal protein S1.</text>
</comment>
<comment type="catalytic activity">
    <reaction evidence="1 2">
        <text>RNA(n) + a ribonucleoside 5'-triphosphate = RNA(n+1) + diphosphate</text>
        <dbReference type="Rhea" id="RHEA:21248"/>
        <dbReference type="Rhea" id="RHEA-COMP:14527"/>
        <dbReference type="Rhea" id="RHEA-COMP:17342"/>
        <dbReference type="ChEBI" id="CHEBI:33019"/>
        <dbReference type="ChEBI" id="CHEBI:61557"/>
        <dbReference type="ChEBI" id="CHEBI:140395"/>
        <dbReference type="EC" id="2.7.7.48"/>
    </reaction>
</comment>
<comment type="cofactor">
    <cofactor evidence="1">
        <name>Mg(2+)</name>
        <dbReference type="ChEBI" id="CHEBI:18420"/>
    </cofactor>
    <text evidence="1">Binds 2 Mg(2+) per subunit, Ca(2+) is used in crystallization to prevent RNA polymerase activity.</text>
</comment>
<comment type="subunit">
    <text evidence="1">Homodimer; the replicase complex can dimerize. Part of the viral RNA-dependent RNA polymerase complex, the other subunits are the host ribosomal protein S1, EF-Tu and EF-Ts. S1 is needed for the initiation of genomic RNA (+)-strand replication.</text>
</comment>
<organism>
    <name type="scientific">Enterobacteria phage SP</name>
    <name type="common">Bacteriophage SP</name>
    <dbReference type="NCBI Taxonomy" id="12027"/>
    <lineage>
        <taxon>Viruses</taxon>
        <taxon>Riboviria</taxon>
        <taxon>Orthornavirae</taxon>
        <taxon>Lenarviricota</taxon>
        <taxon>Leviviricetes</taxon>
        <taxon>Norzivirales</taxon>
        <taxon>Fiersviridae</taxon>
        <taxon>Qubevirus</taxon>
        <taxon>Qubevirus faecium</taxon>
    </lineage>
</organism>
<sequence>MPKTASRRREITQLLGKVDINFEDDIHMSIANDLFEAYGIPKLDSAEECINTAFPSLDQGVDTFRVEYLRAEILSKFDGHPLGIDTEAAAWEKFLAAEEGCRQTNERLSLVKYHDNSILSWGERVIHTARRKILKLIGESVPFGDVALRCRFSGGATTSVNRLHGHPSWKHACPQDVTKRAFKYLQAFKRACGDVVDLRVNEVRTSNKAVTVPKNSKTDRCIAIEPGWNMFFQLGVGAVLRDRLRLWKIDLNDQSTNQRLARDGSLLNHLATIDLSAASDSISLKLVELLMPPEWYDLLTDLRSDEGILPDGRVVTYEKISSMGNGYTFELESLIFAAIARSVCELLEIDQSTVSVYGDDIIIDTRAAAPLMDVFEYVGFTPNRKKTFCDGPFRESCGKHWFQGVDVTPFYIRRPIRCLADMILVLNSIYRWGTVDGIWDPRALTVYEKYLKLLPRNWRRNRIPDGYGDGALVGLATTNPFVIVKNYSRLYPVLVEVQRDVKRSEEGSYLYALLRDRETRYSPFLRDADRTGFDEAPLATSLRRKTGRYKVAWIQDSAFIRPPYLITGIPEVKLAS</sequence>
<organismHost>
    <name type="scientific">Escherichia coli</name>
    <dbReference type="NCBI Taxonomy" id="562"/>
</organismHost>
<protein>
    <recommendedName>
        <fullName>RNA-directed RNA polymerase subunit beta</fullName>
        <ecNumber evidence="1">2.7.7.48</ecNumber>
    </recommendedName>
    <alternativeName>
        <fullName>RNA replicase beta chain</fullName>
    </alternativeName>
</protein>
<reference key="1">
    <citation type="journal article" date="1988" name="Nucleic Acids Res.">
        <title>Analysis of the complete nucleotide sequence of the group IV RNA coliphage SP.</title>
        <authorList>
            <person name="Hirashima A."/>
            <person name="Hirose T."/>
            <person name="Inayama S."/>
            <person name="Inokuchi Y."/>
            <person name="Jacobson A.B."/>
        </authorList>
    </citation>
    <scope>NUCLEOTIDE SEQUENCE [MRNA]</scope>
</reference>
<accession>P09675</accession>